<name>TWF2A_XENLA</name>
<dbReference type="EMBL" id="BC044672">
    <property type="protein sequence ID" value="AAH44672.1"/>
    <property type="molecule type" value="mRNA"/>
</dbReference>
<dbReference type="SMR" id="Q7ZXP0"/>
<dbReference type="DNASU" id="379995"/>
<dbReference type="GeneID" id="379995"/>
<dbReference type="KEGG" id="xla:379995"/>
<dbReference type="AGR" id="Xenbase:XB-GENE-5878672"/>
<dbReference type="CTD" id="379995"/>
<dbReference type="Xenbase" id="XB-GENE-5878672">
    <property type="gene designation" value="twf2.L"/>
</dbReference>
<dbReference type="OMA" id="ICTQTEN"/>
<dbReference type="OrthoDB" id="10006997at2759"/>
<dbReference type="Proteomes" id="UP000186698">
    <property type="component" value="Chromosome 4L"/>
</dbReference>
<dbReference type="Bgee" id="379995">
    <property type="expression patterns" value="Expressed in muscle tissue and 19 other cell types or tissues"/>
</dbReference>
<dbReference type="GO" id="GO:0005884">
    <property type="term" value="C:actin filament"/>
    <property type="evidence" value="ECO:0000318"/>
    <property type="project" value="GO_Central"/>
</dbReference>
<dbReference type="GO" id="GO:0005737">
    <property type="term" value="C:cytoplasm"/>
    <property type="evidence" value="ECO:0000318"/>
    <property type="project" value="GO_Central"/>
</dbReference>
<dbReference type="GO" id="GO:0030016">
    <property type="term" value="C:myofibril"/>
    <property type="evidence" value="ECO:0000318"/>
    <property type="project" value="GO_Central"/>
</dbReference>
<dbReference type="GO" id="GO:0048471">
    <property type="term" value="C:perinuclear region of cytoplasm"/>
    <property type="evidence" value="ECO:0007669"/>
    <property type="project" value="UniProtKB-SubCell"/>
</dbReference>
<dbReference type="GO" id="GO:0051015">
    <property type="term" value="F:actin filament binding"/>
    <property type="evidence" value="ECO:0000318"/>
    <property type="project" value="GO_Central"/>
</dbReference>
<dbReference type="GO" id="GO:0003785">
    <property type="term" value="F:actin monomer binding"/>
    <property type="evidence" value="ECO:0000318"/>
    <property type="project" value="GO_Central"/>
</dbReference>
<dbReference type="GO" id="GO:0030042">
    <property type="term" value="P:actin filament depolymerization"/>
    <property type="evidence" value="ECO:0000318"/>
    <property type="project" value="GO_Central"/>
</dbReference>
<dbReference type="GO" id="GO:0051016">
    <property type="term" value="P:barbed-end actin filament capping"/>
    <property type="evidence" value="ECO:0000318"/>
    <property type="project" value="GO_Central"/>
</dbReference>
<dbReference type="GO" id="GO:0010976">
    <property type="term" value="P:positive regulation of neuron projection development"/>
    <property type="evidence" value="ECO:0000318"/>
    <property type="project" value="GO_Central"/>
</dbReference>
<dbReference type="GO" id="GO:0010591">
    <property type="term" value="P:regulation of lamellipodium assembly"/>
    <property type="evidence" value="ECO:0000318"/>
    <property type="project" value="GO_Central"/>
</dbReference>
<dbReference type="CDD" id="cd11284">
    <property type="entry name" value="ADF_Twf-C_like"/>
    <property type="match status" value="1"/>
</dbReference>
<dbReference type="CDD" id="cd11285">
    <property type="entry name" value="ADF_Twf-N_like"/>
    <property type="match status" value="1"/>
</dbReference>
<dbReference type="FunFam" id="3.40.20.10:FF:000007">
    <property type="entry name" value="Twinfilin-1 isoform 1"/>
    <property type="match status" value="1"/>
</dbReference>
<dbReference type="FunFam" id="3.40.20.10:FF:000012">
    <property type="entry name" value="Twinfilin-1 isoform 1"/>
    <property type="match status" value="1"/>
</dbReference>
<dbReference type="Gene3D" id="3.40.20.10">
    <property type="entry name" value="Severin"/>
    <property type="match status" value="2"/>
</dbReference>
<dbReference type="InterPro" id="IPR002108">
    <property type="entry name" value="ADF-H"/>
</dbReference>
<dbReference type="InterPro" id="IPR029006">
    <property type="entry name" value="ADF-H/Gelsolin-like_dom_sf"/>
</dbReference>
<dbReference type="InterPro" id="IPR028458">
    <property type="entry name" value="Twinfilin"/>
</dbReference>
<dbReference type="PANTHER" id="PTHR13759">
    <property type="entry name" value="TWINFILIN"/>
    <property type="match status" value="1"/>
</dbReference>
<dbReference type="PANTHER" id="PTHR13759:SF9">
    <property type="entry name" value="TWINFILIN-2"/>
    <property type="match status" value="1"/>
</dbReference>
<dbReference type="Pfam" id="PF00241">
    <property type="entry name" value="Cofilin_ADF"/>
    <property type="match status" value="2"/>
</dbReference>
<dbReference type="SMART" id="SM00102">
    <property type="entry name" value="ADF"/>
    <property type="match status" value="2"/>
</dbReference>
<dbReference type="SUPFAM" id="SSF55753">
    <property type="entry name" value="Actin depolymerizing proteins"/>
    <property type="match status" value="2"/>
</dbReference>
<dbReference type="PROSITE" id="PS51263">
    <property type="entry name" value="ADF_H"/>
    <property type="match status" value="2"/>
</dbReference>
<feature type="chain" id="PRO_0000233141" description="Twinfilin-2-A">
    <location>
        <begin position="1"/>
        <end position="349"/>
    </location>
</feature>
<feature type="domain" description="ADF-H 1" evidence="2">
    <location>
        <begin position="4"/>
        <end position="139"/>
    </location>
</feature>
<feature type="domain" description="ADF-H 2" evidence="2">
    <location>
        <begin position="177"/>
        <end position="313"/>
    </location>
</feature>
<feature type="region of interest" description="Disordered" evidence="3">
    <location>
        <begin position="321"/>
        <end position="349"/>
    </location>
</feature>
<protein>
    <recommendedName>
        <fullName>Twinfilin-2-A</fullName>
    </recommendedName>
</protein>
<gene>
    <name type="primary">twf2-a</name>
</gene>
<organism>
    <name type="scientific">Xenopus laevis</name>
    <name type="common">African clawed frog</name>
    <dbReference type="NCBI Taxonomy" id="8355"/>
    <lineage>
        <taxon>Eukaryota</taxon>
        <taxon>Metazoa</taxon>
        <taxon>Chordata</taxon>
        <taxon>Craniata</taxon>
        <taxon>Vertebrata</taxon>
        <taxon>Euteleostomi</taxon>
        <taxon>Amphibia</taxon>
        <taxon>Batrachia</taxon>
        <taxon>Anura</taxon>
        <taxon>Pipoidea</taxon>
        <taxon>Pipidae</taxon>
        <taxon>Xenopodinae</taxon>
        <taxon>Xenopus</taxon>
        <taxon>Xenopus</taxon>
    </lineage>
</organism>
<keyword id="KW-0009">Actin-binding</keyword>
<keyword id="KW-0963">Cytoplasm</keyword>
<keyword id="KW-0206">Cytoskeleton</keyword>
<keyword id="KW-1185">Reference proteome</keyword>
<keyword id="KW-0677">Repeat</keyword>
<accession>Q7ZXP0</accession>
<comment type="function">
    <text evidence="1">Actin-binding protein involved in motile and morphological processes. Inhibits actin polymerization, likely by sequestering G-actin (By similarity).</text>
</comment>
<comment type="subunit">
    <text evidence="1">Interacts with G-actin; ADP-actin form and capping protein (CP).</text>
</comment>
<comment type="subcellular location">
    <subcellularLocation>
        <location evidence="1">Cytoplasm</location>
        <location evidence="1">Cytoskeleton</location>
    </subcellularLocation>
    <subcellularLocation>
        <location evidence="1">Cytoplasm</location>
        <location evidence="1">Perinuclear region</location>
    </subcellularLocation>
    <text evidence="1">Perinuclear and G-actin-rich cortical actin structure sublocalization.</text>
</comment>
<comment type="similarity">
    <text evidence="4">Belongs to the actin-binding proteins ADF family. Twinfilin subfamily.</text>
</comment>
<comment type="online information" name="Protein Spotlight">
    <link uri="https://www.proteinspotlight.org/back_issues/073"/>
    <text>Molecular embrace - Issue 73 of August 2006</text>
</comment>
<reference key="1">
    <citation type="submission" date="2003-01" db="EMBL/GenBank/DDBJ databases">
        <authorList>
            <consortium name="NIH - Xenopus Gene Collection (XGC) project"/>
        </authorList>
    </citation>
    <scope>NUCLEOTIDE SEQUENCE [LARGE SCALE MRNA]</scope>
    <source>
        <tissue>Embryo</tissue>
    </source>
</reference>
<evidence type="ECO:0000250" key="1"/>
<evidence type="ECO:0000255" key="2">
    <source>
        <dbReference type="PROSITE-ProRule" id="PRU00599"/>
    </source>
</evidence>
<evidence type="ECO:0000256" key="3">
    <source>
        <dbReference type="SAM" id="MobiDB-lite"/>
    </source>
</evidence>
<evidence type="ECO:0000305" key="4"/>
<proteinExistence type="evidence at transcript level"/>
<sequence length="349" mass="39878">MAHQTGIHATPELKEFFAKARNGSIRLIKVVIEEEQLVLGSHKELKHAWEQDYDALIVPLLDESQPCYILYRLDSQNAQGYEWIFLSWSPDHSPVRLKMLYAATRATVKKEFGGGHIKDEIFGTLKEDVALSGYKKHVSLCAAPAPLTAAERELQEIKINEVKTEISVESKQQTLQGLSFPLRPEAEEAILLLKQKKINYIQLRLDLEKETVDLVHTKHTEIKDLPGRIPQDTARYHFFLYKHSHEGDHLESVVFIYSMPGYKCSIKERMLYSSCKNRLLDSVEQDFQLEIAKKIEIEDGAELTDEFLYDEVHPKQHAFKQAFAKPKGPAGKRGQKRLIKGPGENGEDS</sequence>